<comment type="catalytic activity">
    <reaction evidence="1">
        <text>CMP + ATP = CDP + ADP</text>
        <dbReference type="Rhea" id="RHEA:11600"/>
        <dbReference type="ChEBI" id="CHEBI:30616"/>
        <dbReference type="ChEBI" id="CHEBI:58069"/>
        <dbReference type="ChEBI" id="CHEBI:60377"/>
        <dbReference type="ChEBI" id="CHEBI:456216"/>
        <dbReference type="EC" id="2.7.4.25"/>
    </reaction>
</comment>
<comment type="catalytic activity">
    <reaction evidence="1">
        <text>dCMP + ATP = dCDP + ADP</text>
        <dbReference type="Rhea" id="RHEA:25094"/>
        <dbReference type="ChEBI" id="CHEBI:30616"/>
        <dbReference type="ChEBI" id="CHEBI:57566"/>
        <dbReference type="ChEBI" id="CHEBI:58593"/>
        <dbReference type="ChEBI" id="CHEBI:456216"/>
        <dbReference type="EC" id="2.7.4.25"/>
    </reaction>
</comment>
<comment type="subcellular location">
    <subcellularLocation>
        <location evidence="1">Cytoplasm</location>
    </subcellularLocation>
</comment>
<comment type="similarity">
    <text evidence="1">Belongs to the cytidylate kinase family. Type 1 subfamily.</text>
</comment>
<gene>
    <name evidence="1" type="primary">cmk</name>
    <name type="ordered locus">CV_3047</name>
</gene>
<dbReference type="EC" id="2.7.4.25" evidence="1"/>
<dbReference type="EMBL" id="AE016825">
    <property type="protein sequence ID" value="AAQ60716.1"/>
    <property type="molecule type" value="Genomic_DNA"/>
</dbReference>
<dbReference type="RefSeq" id="WP_011136594.1">
    <property type="nucleotide sequence ID" value="NC_005085.1"/>
</dbReference>
<dbReference type="SMR" id="Q7NTK7"/>
<dbReference type="STRING" id="243365.CV_3047"/>
<dbReference type="KEGG" id="cvi:CV_3047"/>
<dbReference type="eggNOG" id="COG0283">
    <property type="taxonomic scope" value="Bacteria"/>
</dbReference>
<dbReference type="HOGENOM" id="CLU_079959_2_0_4"/>
<dbReference type="OrthoDB" id="9807434at2"/>
<dbReference type="Proteomes" id="UP000001424">
    <property type="component" value="Chromosome"/>
</dbReference>
<dbReference type="GO" id="GO:0005829">
    <property type="term" value="C:cytosol"/>
    <property type="evidence" value="ECO:0007669"/>
    <property type="project" value="TreeGrafter"/>
</dbReference>
<dbReference type="GO" id="GO:0005524">
    <property type="term" value="F:ATP binding"/>
    <property type="evidence" value="ECO:0007669"/>
    <property type="project" value="UniProtKB-UniRule"/>
</dbReference>
<dbReference type="GO" id="GO:0036430">
    <property type="term" value="F:CMP kinase activity"/>
    <property type="evidence" value="ECO:0007669"/>
    <property type="project" value="RHEA"/>
</dbReference>
<dbReference type="GO" id="GO:0036431">
    <property type="term" value="F:dCMP kinase activity"/>
    <property type="evidence" value="ECO:0007669"/>
    <property type="project" value="RHEA"/>
</dbReference>
<dbReference type="GO" id="GO:0015949">
    <property type="term" value="P:nucleobase-containing small molecule interconversion"/>
    <property type="evidence" value="ECO:0007669"/>
    <property type="project" value="TreeGrafter"/>
</dbReference>
<dbReference type="GO" id="GO:0006220">
    <property type="term" value="P:pyrimidine nucleotide metabolic process"/>
    <property type="evidence" value="ECO:0007669"/>
    <property type="project" value="UniProtKB-UniRule"/>
</dbReference>
<dbReference type="CDD" id="cd02020">
    <property type="entry name" value="CMPK"/>
    <property type="match status" value="1"/>
</dbReference>
<dbReference type="Gene3D" id="3.40.50.300">
    <property type="entry name" value="P-loop containing nucleotide triphosphate hydrolases"/>
    <property type="match status" value="1"/>
</dbReference>
<dbReference type="HAMAP" id="MF_00238">
    <property type="entry name" value="Cytidyl_kinase_type1"/>
    <property type="match status" value="1"/>
</dbReference>
<dbReference type="InterPro" id="IPR003136">
    <property type="entry name" value="Cytidylate_kin"/>
</dbReference>
<dbReference type="InterPro" id="IPR011994">
    <property type="entry name" value="Cytidylate_kinase_dom"/>
</dbReference>
<dbReference type="InterPro" id="IPR027417">
    <property type="entry name" value="P-loop_NTPase"/>
</dbReference>
<dbReference type="NCBIfam" id="TIGR00017">
    <property type="entry name" value="cmk"/>
    <property type="match status" value="1"/>
</dbReference>
<dbReference type="PANTHER" id="PTHR21299:SF2">
    <property type="entry name" value="CYTIDYLATE KINASE"/>
    <property type="match status" value="1"/>
</dbReference>
<dbReference type="PANTHER" id="PTHR21299">
    <property type="entry name" value="CYTIDYLATE KINASE/PANTOATE-BETA-ALANINE LIGASE"/>
    <property type="match status" value="1"/>
</dbReference>
<dbReference type="Pfam" id="PF02224">
    <property type="entry name" value="Cytidylate_kin"/>
    <property type="match status" value="1"/>
</dbReference>
<dbReference type="SUPFAM" id="SSF52540">
    <property type="entry name" value="P-loop containing nucleoside triphosphate hydrolases"/>
    <property type="match status" value="1"/>
</dbReference>
<keyword id="KW-0067">ATP-binding</keyword>
<keyword id="KW-0963">Cytoplasm</keyword>
<keyword id="KW-0418">Kinase</keyword>
<keyword id="KW-0547">Nucleotide-binding</keyword>
<keyword id="KW-1185">Reference proteome</keyword>
<keyword id="KW-0808">Transferase</keyword>
<name>KCY_CHRVO</name>
<organism>
    <name type="scientific">Chromobacterium violaceum (strain ATCC 12472 / DSM 30191 / JCM 1249 / CCUG 213 / NBRC 12614 / NCIMB 9131 / NCTC 9757 / MK)</name>
    <dbReference type="NCBI Taxonomy" id="243365"/>
    <lineage>
        <taxon>Bacteria</taxon>
        <taxon>Pseudomonadati</taxon>
        <taxon>Pseudomonadota</taxon>
        <taxon>Betaproteobacteria</taxon>
        <taxon>Neisseriales</taxon>
        <taxon>Chromobacteriaceae</taxon>
        <taxon>Chromobacterium</taxon>
    </lineage>
</organism>
<protein>
    <recommendedName>
        <fullName evidence="1">Cytidylate kinase</fullName>
        <shortName evidence="1">CK</shortName>
        <ecNumber evidence="1">2.7.4.25</ecNumber>
    </recommendedName>
    <alternativeName>
        <fullName evidence="1">Cytidine monophosphate kinase</fullName>
        <shortName evidence="1">CMP kinase</shortName>
    </alternativeName>
</protein>
<accession>Q7NTK7</accession>
<reference key="1">
    <citation type="journal article" date="2003" name="Proc. Natl. Acad. Sci. U.S.A.">
        <title>The complete genome sequence of Chromobacterium violaceum reveals remarkable and exploitable bacterial adaptability.</title>
        <authorList>
            <person name="Vasconcelos A.T.R."/>
            <person name="de Almeida D.F."/>
            <person name="Hungria M."/>
            <person name="Guimaraes C.T."/>
            <person name="Antonio R.V."/>
            <person name="Almeida F.C."/>
            <person name="de Almeida L.G.P."/>
            <person name="de Almeida R."/>
            <person name="Alves-Gomes J.A."/>
            <person name="Andrade E.M."/>
            <person name="Araripe J."/>
            <person name="de Araujo M.F.F."/>
            <person name="Astolfi-Filho S."/>
            <person name="Azevedo V."/>
            <person name="Baptista A.J."/>
            <person name="Bataus L.A.M."/>
            <person name="Batista J.S."/>
            <person name="Belo A."/>
            <person name="van den Berg C."/>
            <person name="Bogo M."/>
            <person name="Bonatto S."/>
            <person name="Bordignon J."/>
            <person name="Brigido M.M."/>
            <person name="Brito C.A."/>
            <person name="Brocchi M."/>
            <person name="Burity H.A."/>
            <person name="Camargo A.A."/>
            <person name="Cardoso D.D.P."/>
            <person name="Carneiro N.P."/>
            <person name="Carraro D.M."/>
            <person name="Carvalho C.M.B."/>
            <person name="Cascardo J.C.M."/>
            <person name="Cavada B.S."/>
            <person name="Chueire L.M.O."/>
            <person name="Creczynski-Pasa T.B."/>
            <person name="Cunha-Junior N.C."/>
            <person name="Fagundes N."/>
            <person name="Falcao C.L."/>
            <person name="Fantinatti F."/>
            <person name="Farias I.P."/>
            <person name="Felipe M.S.S."/>
            <person name="Ferrari L.P."/>
            <person name="Ferro J.A."/>
            <person name="Ferro M.I.T."/>
            <person name="Franco G.R."/>
            <person name="Freitas N.S.A."/>
            <person name="Furlan L.R."/>
            <person name="Gazzinelli R.T."/>
            <person name="Gomes E.A."/>
            <person name="Goncalves P.R."/>
            <person name="Grangeiro T.B."/>
            <person name="Grattapaglia D."/>
            <person name="Grisard E.C."/>
            <person name="Hanna E.S."/>
            <person name="Jardim S.N."/>
            <person name="Laurino J."/>
            <person name="Leoi L.C.T."/>
            <person name="Lima L.F.A."/>
            <person name="Loureiro M.F."/>
            <person name="Lyra M.C.C.P."/>
            <person name="Madeira H.M.F."/>
            <person name="Manfio G.P."/>
            <person name="Maranhao A.Q."/>
            <person name="Martins W.S."/>
            <person name="di Mauro S.M.Z."/>
            <person name="de Medeiros S.R.B."/>
            <person name="Meissner R.V."/>
            <person name="Moreira M.A.M."/>
            <person name="Nascimento F.F."/>
            <person name="Nicolas M.F."/>
            <person name="Oliveira J.G."/>
            <person name="Oliveira S.C."/>
            <person name="Paixao R.F.C."/>
            <person name="Parente J.A."/>
            <person name="Pedrosa F.O."/>
            <person name="Pena S.D.J."/>
            <person name="Pereira J.O."/>
            <person name="Pereira M."/>
            <person name="Pinto L.S.R.C."/>
            <person name="Pinto L.S."/>
            <person name="Porto J.I.R."/>
            <person name="Potrich D.P."/>
            <person name="Ramalho-Neto C.E."/>
            <person name="Reis A.M.M."/>
            <person name="Rigo L.U."/>
            <person name="Rondinelli E."/>
            <person name="Santos E.B.P."/>
            <person name="Santos F.R."/>
            <person name="Schneider M.P.C."/>
            <person name="Seuanez H.N."/>
            <person name="Silva A.M.R."/>
            <person name="da Silva A.L.C."/>
            <person name="Silva D.W."/>
            <person name="Silva R."/>
            <person name="Simoes I.C."/>
            <person name="Simon D."/>
            <person name="Soares C.M.A."/>
            <person name="Soares R.B.A."/>
            <person name="Souza E.M."/>
            <person name="Souza K.R.L."/>
            <person name="Souza R.C."/>
            <person name="Steffens M.B.R."/>
            <person name="Steindel M."/>
            <person name="Teixeira S.R."/>
            <person name="Urmenyi T."/>
            <person name="Vettore A."/>
            <person name="Wassem R."/>
            <person name="Zaha A."/>
            <person name="Simpson A.J.G."/>
        </authorList>
    </citation>
    <scope>NUCLEOTIDE SEQUENCE [LARGE SCALE GENOMIC DNA]</scope>
    <source>
        <strain>ATCC 12472 / DSM 30191 / JCM 1249 / CCUG 213 / NBRC 12614 / NCIMB 9131 / NCTC 9757 / MK</strain>
    </source>
</reference>
<feature type="chain" id="PRO_0000131903" description="Cytidylate kinase">
    <location>
        <begin position="1"/>
        <end position="222"/>
    </location>
</feature>
<feature type="binding site" evidence="1">
    <location>
        <begin position="10"/>
        <end position="18"/>
    </location>
    <ligand>
        <name>ATP</name>
        <dbReference type="ChEBI" id="CHEBI:30616"/>
    </ligand>
</feature>
<evidence type="ECO:0000255" key="1">
    <source>
        <dbReference type="HAMAP-Rule" id="MF_00238"/>
    </source>
</evidence>
<proteinExistence type="inferred from homology"/>
<sequence>MTVPVITIDGPSASGKGTVAAQVAARLAFHYLDSGSLYRLLALHARRRGIAWDDEPALARAAAALPVEFSDGAVWLEGNDASQDIRAEEIGIGASKVGALPAVRAALLQRQRDFCEAPGLVTDGRDMGSVVFPDATLKIFLTASAEERASRRHKQLIGKGESANLAQIMQDIIDRDARDAARPVAPLRQEPDAFLLDTTELTIDQAVDKVLEWFEEKQASGH</sequence>